<gene>
    <name evidence="1" type="primary">fmt</name>
    <name type="ordered locus">YPTB3666</name>
</gene>
<dbReference type="EC" id="2.1.2.9" evidence="1"/>
<dbReference type="EMBL" id="BX936398">
    <property type="protein sequence ID" value="CAH22904.1"/>
    <property type="molecule type" value="Genomic_DNA"/>
</dbReference>
<dbReference type="RefSeq" id="WP_002209020.1">
    <property type="nucleotide sequence ID" value="NZ_CP009712.1"/>
</dbReference>
<dbReference type="SMR" id="Q664V3"/>
<dbReference type="GeneID" id="57974363"/>
<dbReference type="KEGG" id="ypo:BZ17_2921"/>
<dbReference type="KEGG" id="yps:YPTB3666"/>
<dbReference type="PATRIC" id="fig|273123.14.peg.3062"/>
<dbReference type="Proteomes" id="UP000001011">
    <property type="component" value="Chromosome"/>
</dbReference>
<dbReference type="GO" id="GO:0005829">
    <property type="term" value="C:cytosol"/>
    <property type="evidence" value="ECO:0007669"/>
    <property type="project" value="TreeGrafter"/>
</dbReference>
<dbReference type="GO" id="GO:0004479">
    <property type="term" value="F:methionyl-tRNA formyltransferase activity"/>
    <property type="evidence" value="ECO:0007669"/>
    <property type="project" value="UniProtKB-UniRule"/>
</dbReference>
<dbReference type="CDD" id="cd08646">
    <property type="entry name" value="FMT_core_Met-tRNA-FMT_N"/>
    <property type="match status" value="1"/>
</dbReference>
<dbReference type="CDD" id="cd08704">
    <property type="entry name" value="Met_tRNA_FMT_C"/>
    <property type="match status" value="1"/>
</dbReference>
<dbReference type="FunFam" id="3.10.25.10:FF:000001">
    <property type="entry name" value="Methionyl-tRNA formyltransferase"/>
    <property type="match status" value="1"/>
</dbReference>
<dbReference type="FunFam" id="3.40.50.12230:FF:000001">
    <property type="entry name" value="Methionyl-tRNA formyltransferase"/>
    <property type="match status" value="1"/>
</dbReference>
<dbReference type="FunFam" id="3.40.50.170:FF:000003">
    <property type="entry name" value="Methionyl-tRNA formyltransferase"/>
    <property type="match status" value="1"/>
</dbReference>
<dbReference type="Gene3D" id="3.10.25.10">
    <property type="entry name" value="Formyl transferase, C-terminal domain"/>
    <property type="match status" value="1"/>
</dbReference>
<dbReference type="Gene3D" id="3.40.50.170">
    <property type="entry name" value="Formyl transferase, N-terminal domain"/>
    <property type="match status" value="1"/>
</dbReference>
<dbReference type="HAMAP" id="MF_00182">
    <property type="entry name" value="Formyl_trans"/>
    <property type="match status" value="1"/>
</dbReference>
<dbReference type="InterPro" id="IPR005794">
    <property type="entry name" value="Fmt"/>
</dbReference>
<dbReference type="InterPro" id="IPR005793">
    <property type="entry name" value="Formyl_trans_C"/>
</dbReference>
<dbReference type="InterPro" id="IPR037022">
    <property type="entry name" value="Formyl_trans_C_sf"/>
</dbReference>
<dbReference type="InterPro" id="IPR002376">
    <property type="entry name" value="Formyl_transf_N"/>
</dbReference>
<dbReference type="InterPro" id="IPR036477">
    <property type="entry name" value="Formyl_transf_N_sf"/>
</dbReference>
<dbReference type="InterPro" id="IPR011034">
    <property type="entry name" value="Formyl_transferase-like_C_sf"/>
</dbReference>
<dbReference type="InterPro" id="IPR001555">
    <property type="entry name" value="GART_AS"/>
</dbReference>
<dbReference type="InterPro" id="IPR044135">
    <property type="entry name" value="Met-tRNA-FMT_C"/>
</dbReference>
<dbReference type="InterPro" id="IPR041711">
    <property type="entry name" value="Met-tRNA-FMT_N"/>
</dbReference>
<dbReference type="NCBIfam" id="TIGR00460">
    <property type="entry name" value="fmt"/>
    <property type="match status" value="1"/>
</dbReference>
<dbReference type="PANTHER" id="PTHR11138">
    <property type="entry name" value="METHIONYL-TRNA FORMYLTRANSFERASE"/>
    <property type="match status" value="1"/>
</dbReference>
<dbReference type="PANTHER" id="PTHR11138:SF5">
    <property type="entry name" value="METHIONYL-TRNA FORMYLTRANSFERASE, MITOCHONDRIAL"/>
    <property type="match status" value="1"/>
</dbReference>
<dbReference type="Pfam" id="PF02911">
    <property type="entry name" value="Formyl_trans_C"/>
    <property type="match status" value="1"/>
</dbReference>
<dbReference type="Pfam" id="PF00551">
    <property type="entry name" value="Formyl_trans_N"/>
    <property type="match status" value="1"/>
</dbReference>
<dbReference type="SUPFAM" id="SSF50486">
    <property type="entry name" value="FMT C-terminal domain-like"/>
    <property type="match status" value="1"/>
</dbReference>
<dbReference type="SUPFAM" id="SSF53328">
    <property type="entry name" value="Formyltransferase"/>
    <property type="match status" value="1"/>
</dbReference>
<dbReference type="PROSITE" id="PS00373">
    <property type="entry name" value="GART"/>
    <property type="match status" value="1"/>
</dbReference>
<protein>
    <recommendedName>
        <fullName evidence="1">Methionyl-tRNA formyltransferase</fullName>
        <ecNumber evidence="1">2.1.2.9</ecNumber>
    </recommendedName>
</protein>
<keyword id="KW-0648">Protein biosynthesis</keyword>
<keyword id="KW-0808">Transferase</keyword>
<feature type="chain" id="PRO_0000083094" description="Methionyl-tRNA formyltransferase">
    <location>
        <begin position="1"/>
        <end position="315"/>
    </location>
</feature>
<feature type="binding site" evidence="1">
    <location>
        <begin position="113"/>
        <end position="116"/>
    </location>
    <ligand>
        <name>(6S)-5,6,7,8-tetrahydrofolate</name>
        <dbReference type="ChEBI" id="CHEBI:57453"/>
    </ligand>
</feature>
<proteinExistence type="inferred from homology"/>
<reference key="1">
    <citation type="journal article" date="2004" name="Proc. Natl. Acad. Sci. U.S.A.">
        <title>Insights into the evolution of Yersinia pestis through whole-genome comparison with Yersinia pseudotuberculosis.</title>
        <authorList>
            <person name="Chain P.S.G."/>
            <person name="Carniel E."/>
            <person name="Larimer F.W."/>
            <person name="Lamerdin J."/>
            <person name="Stoutland P.O."/>
            <person name="Regala W.M."/>
            <person name="Georgescu A.M."/>
            <person name="Vergez L.M."/>
            <person name="Land M.L."/>
            <person name="Motin V.L."/>
            <person name="Brubaker R.R."/>
            <person name="Fowler J."/>
            <person name="Hinnebusch J."/>
            <person name="Marceau M."/>
            <person name="Medigue C."/>
            <person name="Simonet M."/>
            <person name="Chenal-Francisque V."/>
            <person name="Souza B."/>
            <person name="Dacheux D."/>
            <person name="Elliott J.M."/>
            <person name="Derbise A."/>
            <person name="Hauser L.J."/>
            <person name="Garcia E."/>
        </authorList>
    </citation>
    <scope>NUCLEOTIDE SEQUENCE [LARGE SCALE GENOMIC DNA]</scope>
    <source>
        <strain>IP32953</strain>
    </source>
</reference>
<sequence length="315" mass="34140">MSDSLRIIFAGTPDFAARHLGALLSSQHKIVGVFTQPDRPAGRGNKLTPSPVKILAEHHGIPVFQPKSLRPEENQHLVADLNADIMVVVAYGLILPAAVLAMPRLGCINVHGSLLPRWRGAAPIQRSVWAGDEKTGITIMQMDIGLDTGAMLHKIECAIQPEDTSATLYDKLAQLGPQGLLITLQQLAAGTALAEVQNETQATYAEKLSKEEAKLDWTLSATQLERCIRAFNPWPVSYFIVDEQPIKVWQAQVLPAGEDAEPGTIIHADKHGIQVATADGVLNITQLQPAGKKAMSAADLLNSRREWFIPGSQLV</sequence>
<comment type="function">
    <text evidence="1">Attaches a formyl group to the free amino group of methionyl-tRNA(fMet). The formyl group appears to play a dual role in the initiator identity of N-formylmethionyl-tRNA by promoting its recognition by IF2 and preventing the misappropriation of this tRNA by the elongation apparatus.</text>
</comment>
<comment type="catalytic activity">
    <reaction evidence="1">
        <text>L-methionyl-tRNA(fMet) + (6R)-10-formyltetrahydrofolate = N-formyl-L-methionyl-tRNA(fMet) + (6S)-5,6,7,8-tetrahydrofolate + H(+)</text>
        <dbReference type="Rhea" id="RHEA:24380"/>
        <dbReference type="Rhea" id="RHEA-COMP:9952"/>
        <dbReference type="Rhea" id="RHEA-COMP:9953"/>
        <dbReference type="ChEBI" id="CHEBI:15378"/>
        <dbReference type="ChEBI" id="CHEBI:57453"/>
        <dbReference type="ChEBI" id="CHEBI:78530"/>
        <dbReference type="ChEBI" id="CHEBI:78844"/>
        <dbReference type="ChEBI" id="CHEBI:195366"/>
        <dbReference type="EC" id="2.1.2.9"/>
    </reaction>
</comment>
<comment type="similarity">
    <text evidence="1">Belongs to the Fmt family.</text>
</comment>
<organism>
    <name type="scientific">Yersinia pseudotuberculosis serotype I (strain IP32953)</name>
    <dbReference type="NCBI Taxonomy" id="273123"/>
    <lineage>
        <taxon>Bacteria</taxon>
        <taxon>Pseudomonadati</taxon>
        <taxon>Pseudomonadota</taxon>
        <taxon>Gammaproteobacteria</taxon>
        <taxon>Enterobacterales</taxon>
        <taxon>Yersiniaceae</taxon>
        <taxon>Yersinia</taxon>
    </lineage>
</organism>
<name>FMT_YERPS</name>
<accession>Q664V3</accession>
<evidence type="ECO:0000255" key="1">
    <source>
        <dbReference type="HAMAP-Rule" id="MF_00182"/>
    </source>
</evidence>